<name>DIAA_SHIDS</name>
<accession>Q32BI3</accession>
<evidence type="ECO:0000255" key="1">
    <source>
        <dbReference type="HAMAP-Rule" id="MF_01157"/>
    </source>
</evidence>
<gene>
    <name evidence="1" type="primary">diaA</name>
    <name type="ordered locus">SDY_3328</name>
</gene>
<proteinExistence type="inferred from homology"/>
<sequence>MQERIKACFTESIQTQIAAAEALPDAISRAAMTLVQSLLNGNKILCCGNGTSAANAQHFAASMINRFETERPSLPAIALNTDNVVLTAIANDRLHDEVYAKQVRALGHAGDVLLAISTRGNSRDIVKAVEAAVTRDMTIVALTGYDGGELAGLLGPQDVEIRIPSHRSARIQEMHMLTVNCLCDLIDNTLFPHQDD</sequence>
<reference key="1">
    <citation type="journal article" date="2005" name="Nucleic Acids Res.">
        <title>Genome dynamics and diversity of Shigella species, the etiologic agents of bacillary dysentery.</title>
        <authorList>
            <person name="Yang F."/>
            <person name="Yang J."/>
            <person name="Zhang X."/>
            <person name="Chen L."/>
            <person name="Jiang Y."/>
            <person name="Yan Y."/>
            <person name="Tang X."/>
            <person name="Wang J."/>
            <person name="Xiong Z."/>
            <person name="Dong J."/>
            <person name="Xue Y."/>
            <person name="Zhu Y."/>
            <person name="Xu X."/>
            <person name="Sun L."/>
            <person name="Chen S."/>
            <person name="Nie H."/>
            <person name="Peng J."/>
            <person name="Xu J."/>
            <person name="Wang Y."/>
            <person name="Yuan Z."/>
            <person name="Wen Y."/>
            <person name="Yao Z."/>
            <person name="Shen Y."/>
            <person name="Qiang B."/>
            <person name="Hou Y."/>
            <person name="Yu J."/>
            <person name="Jin Q."/>
        </authorList>
    </citation>
    <scope>NUCLEOTIDE SEQUENCE [LARGE SCALE GENOMIC DNA]</scope>
    <source>
        <strain>Sd197</strain>
    </source>
</reference>
<protein>
    <recommendedName>
        <fullName evidence="1">DnaA initiator-associating protein DiaA</fullName>
    </recommendedName>
</protein>
<organism>
    <name type="scientific">Shigella dysenteriae serotype 1 (strain Sd197)</name>
    <dbReference type="NCBI Taxonomy" id="300267"/>
    <lineage>
        <taxon>Bacteria</taxon>
        <taxon>Pseudomonadati</taxon>
        <taxon>Pseudomonadota</taxon>
        <taxon>Gammaproteobacteria</taxon>
        <taxon>Enterobacterales</taxon>
        <taxon>Enterobacteriaceae</taxon>
        <taxon>Shigella</taxon>
    </lineage>
</organism>
<dbReference type="EMBL" id="CP000034">
    <property type="protein sequence ID" value="ABB63322.1"/>
    <property type="molecule type" value="Genomic_DNA"/>
</dbReference>
<dbReference type="RefSeq" id="WP_001158034.1">
    <property type="nucleotide sequence ID" value="NC_007606.1"/>
</dbReference>
<dbReference type="RefSeq" id="YP_404813.1">
    <property type="nucleotide sequence ID" value="NC_007606.1"/>
</dbReference>
<dbReference type="SMR" id="Q32BI3"/>
<dbReference type="STRING" id="300267.SDY_3328"/>
<dbReference type="EnsemblBacteria" id="ABB63322">
    <property type="protein sequence ID" value="ABB63322"/>
    <property type="gene ID" value="SDY_3328"/>
</dbReference>
<dbReference type="GeneID" id="93778835"/>
<dbReference type="KEGG" id="sdy:SDY_3328"/>
<dbReference type="PATRIC" id="fig|300267.13.peg.3981"/>
<dbReference type="HOGENOM" id="CLU_080999_3_1_6"/>
<dbReference type="Proteomes" id="UP000002716">
    <property type="component" value="Chromosome"/>
</dbReference>
<dbReference type="GO" id="GO:0097367">
    <property type="term" value="F:carbohydrate derivative binding"/>
    <property type="evidence" value="ECO:0007669"/>
    <property type="project" value="InterPro"/>
</dbReference>
<dbReference type="GO" id="GO:1901135">
    <property type="term" value="P:carbohydrate derivative metabolic process"/>
    <property type="evidence" value="ECO:0007669"/>
    <property type="project" value="InterPro"/>
</dbReference>
<dbReference type="GO" id="GO:0006260">
    <property type="term" value="P:DNA replication"/>
    <property type="evidence" value="ECO:0007669"/>
    <property type="project" value="UniProtKB-UniRule"/>
</dbReference>
<dbReference type="CDD" id="cd05006">
    <property type="entry name" value="SIS_GmhA"/>
    <property type="match status" value="1"/>
</dbReference>
<dbReference type="FunFam" id="3.40.50.10490:FF:000006">
    <property type="entry name" value="DnaA initiator-associating protein DiaA"/>
    <property type="match status" value="1"/>
</dbReference>
<dbReference type="Gene3D" id="3.40.50.10490">
    <property type="entry name" value="Glucose-6-phosphate isomerase like protein, domain 1"/>
    <property type="match status" value="1"/>
</dbReference>
<dbReference type="HAMAP" id="MF_01157">
    <property type="entry name" value="SIS_DiaA"/>
    <property type="match status" value="1"/>
</dbReference>
<dbReference type="InterPro" id="IPR023070">
    <property type="entry name" value="DiaA"/>
</dbReference>
<dbReference type="InterPro" id="IPR035461">
    <property type="entry name" value="GmhA/DiaA"/>
</dbReference>
<dbReference type="InterPro" id="IPR001347">
    <property type="entry name" value="SIS_dom"/>
</dbReference>
<dbReference type="InterPro" id="IPR046348">
    <property type="entry name" value="SIS_dom_sf"/>
</dbReference>
<dbReference type="InterPro" id="IPR050099">
    <property type="entry name" value="SIS_GmhA/DiaA_subfam"/>
</dbReference>
<dbReference type="NCBIfam" id="NF008138">
    <property type="entry name" value="PRK10886.1"/>
    <property type="match status" value="1"/>
</dbReference>
<dbReference type="NCBIfam" id="NF010546">
    <property type="entry name" value="PRK13936.1"/>
    <property type="match status" value="1"/>
</dbReference>
<dbReference type="PANTHER" id="PTHR30390:SF6">
    <property type="entry name" value="DNAA INITIATOR-ASSOCIATING PROTEIN DIAA"/>
    <property type="match status" value="1"/>
</dbReference>
<dbReference type="PANTHER" id="PTHR30390">
    <property type="entry name" value="SEDOHEPTULOSE 7-PHOSPHATE ISOMERASE / DNAA INITIATOR-ASSOCIATING FACTOR FOR REPLICATION INITIATION"/>
    <property type="match status" value="1"/>
</dbReference>
<dbReference type="Pfam" id="PF13580">
    <property type="entry name" value="SIS_2"/>
    <property type="match status" value="1"/>
</dbReference>
<dbReference type="SUPFAM" id="SSF53697">
    <property type="entry name" value="SIS domain"/>
    <property type="match status" value="1"/>
</dbReference>
<dbReference type="PROSITE" id="PS51464">
    <property type="entry name" value="SIS"/>
    <property type="match status" value="1"/>
</dbReference>
<keyword id="KW-0235">DNA replication</keyword>
<keyword id="KW-1185">Reference proteome</keyword>
<comment type="function">
    <text evidence="1">Required for the timely initiation of chromosomal replication via direct interactions with the DnaA initiator protein.</text>
</comment>
<comment type="subunit">
    <text evidence="1">Homotetramer; dimer of dimers.</text>
</comment>
<comment type="similarity">
    <text evidence="1">Belongs to the SIS family. DiaA subfamily.</text>
</comment>
<feature type="chain" id="PRO_1000065550" description="DnaA initiator-associating protein DiaA">
    <location>
        <begin position="1"/>
        <end position="196"/>
    </location>
</feature>
<feature type="domain" description="SIS" evidence="1">
    <location>
        <begin position="34"/>
        <end position="196"/>
    </location>
</feature>